<name>RUVB_LACGA</name>
<reference key="1">
    <citation type="journal article" date="2006" name="Proc. Natl. Acad. Sci. U.S.A.">
        <title>Comparative genomics of the lactic acid bacteria.</title>
        <authorList>
            <person name="Makarova K.S."/>
            <person name="Slesarev A."/>
            <person name="Wolf Y.I."/>
            <person name="Sorokin A."/>
            <person name="Mirkin B."/>
            <person name="Koonin E.V."/>
            <person name="Pavlov A."/>
            <person name="Pavlova N."/>
            <person name="Karamychev V."/>
            <person name="Polouchine N."/>
            <person name="Shakhova V."/>
            <person name="Grigoriev I."/>
            <person name="Lou Y."/>
            <person name="Rohksar D."/>
            <person name="Lucas S."/>
            <person name="Huang K."/>
            <person name="Goodstein D.M."/>
            <person name="Hawkins T."/>
            <person name="Plengvidhya V."/>
            <person name="Welker D."/>
            <person name="Hughes J."/>
            <person name="Goh Y."/>
            <person name="Benson A."/>
            <person name="Baldwin K."/>
            <person name="Lee J.-H."/>
            <person name="Diaz-Muniz I."/>
            <person name="Dosti B."/>
            <person name="Smeianov V."/>
            <person name="Wechter W."/>
            <person name="Barabote R."/>
            <person name="Lorca G."/>
            <person name="Altermann E."/>
            <person name="Barrangou R."/>
            <person name="Ganesan B."/>
            <person name="Xie Y."/>
            <person name="Rawsthorne H."/>
            <person name="Tamir D."/>
            <person name="Parker C."/>
            <person name="Breidt F."/>
            <person name="Broadbent J.R."/>
            <person name="Hutkins R."/>
            <person name="O'Sullivan D."/>
            <person name="Steele J."/>
            <person name="Unlu G."/>
            <person name="Saier M.H. Jr."/>
            <person name="Klaenhammer T."/>
            <person name="Richardson P."/>
            <person name="Kozyavkin S."/>
            <person name="Weimer B.C."/>
            <person name="Mills D.A."/>
        </authorList>
    </citation>
    <scope>NUCLEOTIDE SEQUENCE [LARGE SCALE GENOMIC DNA]</scope>
    <source>
        <strain>ATCC 33323 / DSM 20243 / BCRC 14619 / CIP 102991 / JCM 1131 / KCTC 3163 / NCIMB 11718 / NCTC 13722 / AM63</strain>
    </source>
</reference>
<accession>Q045Q2</accession>
<gene>
    <name evidence="1" type="primary">ruvB</name>
    <name type="ordered locus">LGAS_0415</name>
</gene>
<keyword id="KW-0067">ATP-binding</keyword>
<keyword id="KW-0963">Cytoplasm</keyword>
<keyword id="KW-0227">DNA damage</keyword>
<keyword id="KW-0233">DNA recombination</keyword>
<keyword id="KW-0234">DNA repair</keyword>
<keyword id="KW-0238">DNA-binding</keyword>
<keyword id="KW-0378">Hydrolase</keyword>
<keyword id="KW-0547">Nucleotide-binding</keyword>
<dbReference type="EC" id="3.6.4.-" evidence="1"/>
<dbReference type="EMBL" id="CP000413">
    <property type="protein sequence ID" value="ABJ59820.1"/>
    <property type="molecule type" value="Genomic_DNA"/>
</dbReference>
<dbReference type="RefSeq" id="WP_003652287.1">
    <property type="nucleotide sequence ID" value="NZ_WBMG01000012.1"/>
</dbReference>
<dbReference type="SMR" id="Q045Q2"/>
<dbReference type="GeneID" id="29638695"/>
<dbReference type="KEGG" id="lga:LGAS_0415"/>
<dbReference type="HOGENOM" id="CLU_055599_1_0_9"/>
<dbReference type="BioCyc" id="LGAS324831:G1G6Y-415-MONOMER"/>
<dbReference type="Proteomes" id="UP000000664">
    <property type="component" value="Chromosome"/>
</dbReference>
<dbReference type="GO" id="GO:0005737">
    <property type="term" value="C:cytoplasm"/>
    <property type="evidence" value="ECO:0007669"/>
    <property type="project" value="UniProtKB-SubCell"/>
</dbReference>
<dbReference type="GO" id="GO:0048476">
    <property type="term" value="C:Holliday junction resolvase complex"/>
    <property type="evidence" value="ECO:0007669"/>
    <property type="project" value="UniProtKB-UniRule"/>
</dbReference>
<dbReference type="GO" id="GO:0005524">
    <property type="term" value="F:ATP binding"/>
    <property type="evidence" value="ECO:0007669"/>
    <property type="project" value="UniProtKB-UniRule"/>
</dbReference>
<dbReference type="GO" id="GO:0016887">
    <property type="term" value="F:ATP hydrolysis activity"/>
    <property type="evidence" value="ECO:0007669"/>
    <property type="project" value="InterPro"/>
</dbReference>
<dbReference type="GO" id="GO:0000400">
    <property type="term" value="F:four-way junction DNA binding"/>
    <property type="evidence" value="ECO:0007669"/>
    <property type="project" value="UniProtKB-UniRule"/>
</dbReference>
<dbReference type="GO" id="GO:0009378">
    <property type="term" value="F:four-way junction helicase activity"/>
    <property type="evidence" value="ECO:0007669"/>
    <property type="project" value="InterPro"/>
</dbReference>
<dbReference type="GO" id="GO:0006310">
    <property type="term" value="P:DNA recombination"/>
    <property type="evidence" value="ECO:0007669"/>
    <property type="project" value="UniProtKB-UniRule"/>
</dbReference>
<dbReference type="GO" id="GO:0006281">
    <property type="term" value="P:DNA repair"/>
    <property type="evidence" value="ECO:0007669"/>
    <property type="project" value="UniProtKB-UniRule"/>
</dbReference>
<dbReference type="CDD" id="cd00009">
    <property type="entry name" value="AAA"/>
    <property type="match status" value="1"/>
</dbReference>
<dbReference type="Gene3D" id="1.10.8.60">
    <property type="match status" value="1"/>
</dbReference>
<dbReference type="Gene3D" id="3.40.50.300">
    <property type="entry name" value="P-loop containing nucleotide triphosphate hydrolases"/>
    <property type="match status" value="1"/>
</dbReference>
<dbReference type="Gene3D" id="1.10.10.10">
    <property type="entry name" value="Winged helix-like DNA-binding domain superfamily/Winged helix DNA-binding domain"/>
    <property type="match status" value="1"/>
</dbReference>
<dbReference type="HAMAP" id="MF_00016">
    <property type="entry name" value="DNA_HJ_migration_RuvB"/>
    <property type="match status" value="1"/>
</dbReference>
<dbReference type="InterPro" id="IPR003593">
    <property type="entry name" value="AAA+_ATPase"/>
</dbReference>
<dbReference type="InterPro" id="IPR041445">
    <property type="entry name" value="AAA_lid_4"/>
</dbReference>
<dbReference type="InterPro" id="IPR004605">
    <property type="entry name" value="DNA_helicase_Holl-junc_RuvB"/>
</dbReference>
<dbReference type="InterPro" id="IPR027417">
    <property type="entry name" value="P-loop_NTPase"/>
</dbReference>
<dbReference type="InterPro" id="IPR008824">
    <property type="entry name" value="RuvB-like_N"/>
</dbReference>
<dbReference type="InterPro" id="IPR008823">
    <property type="entry name" value="RuvB_C"/>
</dbReference>
<dbReference type="InterPro" id="IPR036388">
    <property type="entry name" value="WH-like_DNA-bd_sf"/>
</dbReference>
<dbReference type="InterPro" id="IPR036390">
    <property type="entry name" value="WH_DNA-bd_sf"/>
</dbReference>
<dbReference type="NCBIfam" id="NF000868">
    <property type="entry name" value="PRK00080.1"/>
    <property type="match status" value="1"/>
</dbReference>
<dbReference type="NCBIfam" id="TIGR00635">
    <property type="entry name" value="ruvB"/>
    <property type="match status" value="1"/>
</dbReference>
<dbReference type="PANTHER" id="PTHR42848">
    <property type="match status" value="1"/>
</dbReference>
<dbReference type="PANTHER" id="PTHR42848:SF1">
    <property type="entry name" value="HOLLIDAY JUNCTION BRANCH MIGRATION COMPLEX SUBUNIT RUVB"/>
    <property type="match status" value="1"/>
</dbReference>
<dbReference type="Pfam" id="PF17864">
    <property type="entry name" value="AAA_lid_4"/>
    <property type="match status" value="1"/>
</dbReference>
<dbReference type="Pfam" id="PF05491">
    <property type="entry name" value="RuvB_C"/>
    <property type="match status" value="1"/>
</dbReference>
<dbReference type="Pfam" id="PF05496">
    <property type="entry name" value="RuvB_N"/>
    <property type="match status" value="1"/>
</dbReference>
<dbReference type="SMART" id="SM00382">
    <property type="entry name" value="AAA"/>
    <property type="match status" value="1"/>
</dbReference>
<dbReference type="SUPFAM" id="SSF52540">
    <property type="entry name" value="P-loop containing nucleoside triphosphate hydrolases"/>
    <property type="match status" value="1"/>
</dbReference>
<dbReference type="SUPFAM" id="SSF46785">
    <property type="entry name" value="Winged helix' DNA-binding domain"/>
    <property type="match status" value="1"/>
</dbReference>
<feature type="chain" id="PRO_1000001419" description="Holliday junction branch migration complex subunit RuvB">
    <location>
        <begin position="1"/>
        <end position="339"/>
    </location>
</feature>
<feature type="region of interest" description="Large ATPase domain (RuvB-L)" evidence="1">
    <location>
        <begin position="2"/>
        <end position="187"/>
    </location>
</feature>
<feature type="region of interest" description="Small ATPAse domain (RuvB-S)" evidence="1">
    <location>
        <begin position="188"/>
        <end position="258"/>
    </location>
</feature>
<feature type="region of interest" description="Head domain (RuvB-H)" evidence="1">
    <location>
        <begin position="261"/>
        <end position="339"/>
    </location>
</feature>
<feature type="binding site" evidence="1">
    <location>
        <position position="26"/>
    </location>
    <ligand>
        <name>ATP</name>
        <dbReference type="ChEBI" id="CHEBI:30616"/>
    </ligand>
</feature>
<feature type="binding site" evidence="1">
    <location>
        <position position="27"/>
    </location>
    <ligand>
        <name>ATP</name>
        <dbReference type="ChEBI" id="CHEBI:30616"/>
    </ligand>
</feature>
<feature type="binding site" evidence="1">
    <location>
        <position position="68"/>
    </location>
    <ligand>
        <name>ATP</name>
        <dbReference type="ChEBI" id="CHEBI:30616"/>
    </ligand>
</feature>
<feature type="binding site" evidence="1">
    <location>
        <position position="71"/>
    </location>
    <ligand>
        <name>ATP</name>
        <dbReference type="ChEBI" id="CHEBI:30616"/>
    </ligand>
</feature>
<feature type="binding site" evidence="1">
    <location>
        <position position="72"/>
    </location>
    <ligand>
        <name>ATP</name>
        <dbReference type="ChEBI" id="CHEBI:30616"/>
    </ligand>
</feature>
<feature type="binding site" evidence="1">
    <location>
        <position position="72"/>
    </location>
    <ligand>
        <name>Mg(2+)</name>
        <dbReference type="ChEBI" id="CHEBI:18420"/>
    </ligand>
</feature>
<feature type="binding site" evidence="1">
    <location>
        <position position="73"/>
    </location>
    <ligand>
        <name>ATP</name>
        <dbReference type="ChEBI" id="CHEBI:30616"/>
    </ligand>
</feature>
<feature type="binding site" evidence="1">
    <location>
        <begin position="134"/>
        <end position="136"/>
    </location>
    <ligand>
        <name>ATP</name>
        <dbReference type="ChEBI" id="CHEBI:30616"/>
    </ligand>
</feature>
<feature type="binding site" evidence="1">
    <location>
        <position position="177"/>
    </location>
    <ligand>
        <name>ATP</name>
        <dbReference type="ChEBI" id="CHEBI:30616"/>
    </ligand>
</feature>
<feature type="binding site" evidence="1">
    <location>
        <position position="187"/>
    </location>
    <ligand>
        <name>ATP</name>
        <dbReference type="ChEBI" id="CHEBI:30616"/>
    </ligand>
</feature>
<feature type="binding site" evidence="1">
    <location>
        <position position="224"/>
    </location>
    <ligand>
        <name>ATP</name>
        <dbReference type="ChEBI" id="CHEBI:30616"/>
    </ligand>
</feature>
<feature type="binding site" evidence="1">
    <location>
        <position position="316"/>
    </location>
    <ligand>
        <name>DNA</name>
        <dbReference type="ChEBI" id="CHEBI:16991"/>
    </ligand>
</feature>
<feature type="binding site" evidence="1">
    <location>
        <position position="321"/>
    </location>
    <ligand>
        <name>DNA</name>
        <dbReference type="ChEBI" id="CHEBI:16991"/>
    </ligand>
</feature>
<sequence>MKDVNDEERIIGAESNEEDETIELSLRPQLLAQYIGQDKVKSEMKIYIKAAKQRDEALDHVLLYGPPGLGKTTLAFVIANEMGVHLKSTSGPAIEKAGDLVALLSELNPGDVLFIDEIHRLAKPVEEVLYSAMEDFYIDIVVGEGQTTHAVHVPLPPFTLIGATTRAGQLSAPLRDRFGIIEHMQYYSIDDLEKIIQRSSVVFNTKIDPEAAIELARRSRGTPRVANRLLKRVRDFAEVKGEEAISLATTKHSLHLLEVDDEGLDQTDRKLLRMMIENYGGGPVGIKTIAANVGEDTDTIEEVYEPYLLQKGFITRTPRGRSVTQKAYLQLGYPPKKAE</sequence>
<evidence type="ECO:0000255" key="1">
    <source>
        <dbReference type="HAMAP-Rule" id="MF_00016"/>
    </source>
</evidence>
<comment type="function">
    <text evidence="1">The RuvA-RuvB-RuvC complex processes Holliday junction (HJ) DNA during genetic recombination and DNA repair, while the RuvA-RuvB complex plays an important role in the rescue of blocked DNA replication forks via replication fork reversal (RFR). RuvA specifically binds to HJ cruciform DNA, conferring on it an open structure. The RuvB hexamer acts as an ATP-dependent pump, pulling dsDNA into and through the RuvAB complex. RuvB forms 2 homohexamers on either side of HJ DNA bound by 1 or 2 RuvA tetramers; 4 subunits per hexamer contact DNA at a time. Coordinated motions by a converter formed by DNA-disengaged RuvB subunits stimulates ATP hydrolysis and nucleotide exchange. Immobilization of the converter enables RuvB to convert the ATP-contained energy into a lever motion, pulling 2 nucleotides of DNA out of the RuvA tetramer per ATP hydrolyzed, thus driving DNA branch migration. The RuvB motors rotate together with the DNA substrate, which together with the progressing nucleotide cycle form the mechanistic basis for DNA recombination by continuous HJ branch migration. Branch migration allows RuvC to scan DNA until it finds its consensus sequence, where it cleaves and resolves cruciform DNA.</text>
</comment>
<comment type="catalytic activity">
    <reaction evidence="1">
        <text>ATP + H2O = ADP + phosphate + H(+)</text>
        <dbReference type="Rhea" id="RHEA:13065"/>
        <dbReference type="ChEBI" id="CHEBI:15377"/>
        <dbReference type="ChEBI" id="CHEBI:15378"/>
        <dbReference type="ChEBI" id="CHEBI:30616"/>
        <dbReference type="ChEBI" id="CHEBI:43474"/>
        <dbReference type="ChEBI" id="CHEBI:456216"/>
    </reaction>
</comment>
<comment type="subunit">
    <text evidence="1">Homohexamer. Forms an RuvA(8)-RuvB(12)-Holliday junction (HJ) complex. HJ DNA is sandwiched between 2 RuvA tetramers; dsDNA enters through RuvA and exits via RuvB. An RuvB hexamer assembles on each DNA strand where it exits the tetramer. Each RuvB hexamer is contacted by two RuvA subunits (via domain III) on 2 adjacent RuvB subunits; this complex drives branch migration. In the full resolvosome a probable DNA-RuvA(4)-RuvB(12)-RuvC(2) complex forms which resolves the HJ.</text>
</comment>
<comment type="subcellular location">
    <subcellularLocation>
        <location evidence="1">Cytoplasm</location>
    </subcellularLocation>
</comment>
<comment type="domain">
    <text evidence="1">Has 3 domains, the large (RuvB-L) and small ATPase (RuvB-S) domains and the C-terminal head (RuvB-H) domain. The head domain binds DNA, while the ATPase domains jointly bind ATP, ADP or are empty depending on the state of the subunit in the translocation cycle. During a single DNA translocation step the structure of each domain remains the same, but their relative positions change.</text>
</comment>
<comment type="similarity">
    <text evidence="1">Belongs to the RuvB family.</text>
</comment>
<proteinExistence type="inferred from homology"/>
<protein>
    <recommendedName>
        <fullName evidence="1">Holliday junction branch migration complex subunit RuvB</fullName>
        <ecNumber evidence="1">3.6.4.-</ecNumber>
    </recommendedName>
</protein>
<organism>
    <name type="scientific">Lactobacillus gasseri (strain ATCC 33323 / DSM 20243 / BCRC 14619 / CIP 102991 / JCM 1131 / KCTC 3163 / NCIMB 11718 / NCTC 13722 / AM63)</name>
    <dbReference type="NCBI Taxonomy" id="324831"/>
    <lineage>
        <taxon>Bacteria</taxon>
        <taxon>Bacillati</taxon>
        <taxon>Bacillota</taxon>
        <taxon>Bacilli</taxon>
        <taxon>Lactobacillales</taxon>
        <taxon>Lactobacillaceae</taxon>
        <taxon>Lactobacillus</taxon>
    </lineage>
</organism>